<sequence>MGAQRMQRTLLSLVLRLLLLCTVATGKCSGKYHELLLQLQRQADLMQDPSTLLDPYIHLQGLHSPVLQEHCRERPGDFPSEDALWRLSRQDFLQTLNTTLGLILRMLSALQQDLPEAAHQQAEMNVRGFGNNIHCMAQLLRGSSDPKAAEPTQPGPGPTPLPPTPPSSTFQRKLRNCGFLRGYHRFMRTAGQVLRGWGERQGRSRRHSPCRALKRGARRTQPFPEIRRLAPRGQPPGSLWGAPAR</sequence>
<name>ONCM_BOVIN</name>
<feature type="signal peptide" evidence="3">
    <location>
        <begin position="1"/>
        <end position="26"/>
    </location>
</feature>
<feature type="chain" id="PRO_0000017719" description="Oncostatin-M" evidence="2">
    <location>
        <begin position="27"/>
        <end position="206"/>
    </location>
</feature>
<feature type="propeptide" id="PRO_0000408763" evidence="2">
    <location>
        <begin position="207"/>
        <end position="245"/>
    </location>
</feature>
<feature type="region of interest" description="Disordered" evidence="4">
    <location>
        <begin position="143"/>
        <end position="171"/>
    </location>
</feature>
<feature type="region of interest" description="Disordered" evidence="4">
    <location>
        <begin position="197"/>
        <end position="245"/>
    </location>
</feature>
<feature type="compositionally biased region" description="Pro residues" evidence="4">
    <location>
        <begin position="153"/>
        <end position="166"/>
    </location>
</feature>
<feature type="compositionally biased region" description="Basic residues" evidence="4">
    <location>
        <begin position="203"/>
        <end position="218"/>
    </location>
</feature>
<feature type="glycosylation site" description="N-linked (GlcNAc...) asparagine" evidence="3">
    <location>
        <position position="97"/>
    </location>
</feature>
<feature type="disulfide bond" evidence="1">
    <location>
        <begin position="28"/>
        <end position="135"/>
    </location>
</feature>
<feature type="disulfide bond" evidence="1">
    <location>
        <begin position="71"/>
        <end position="177"/>
    </location>
</feature>
<organism>
    <name type="scientific">Bos taurus</name>
    <name type="common">Bovine</name>
    <dbReference type="NCBI Taxonomy" id="9913"/>
    <lineage>
        <taxon>Eukaryota</taxon>
        <taxon>Metazoa</taxon>
        <taxon>Chordata</taxon>
        <taxon>Craniata</taxon>
        <taxon>Vertebrata</taxon>
        <taxon>Euteleostomi</taxon>
        <taxon>Mammalia</taxon>
        <taxon>Eutheria</taxon>
        <taxon>Laurasiatheria</taxon>
        <taxon>Artiodactyla</taxon>
        <taxon>Ruminantia</taxon>
        <taxon>Pecora</taxon>
        <taxon>Bovidae</taxon>
        <taxon>Bovinae</taxon>
        <taxon>Bos</taxon>
    </lineage>
</organism>
<gene>
    <name type="primary">OSM</name>
</gene>
<comment type="function">
    <text evidence="1">Growth regulator. Inhibits the proliferation of a number of tumor cell lines. It regulates cytokine production, including IL-6, G-CSF and GM-CSF from endothelial cells. Uses both type I OSM receptor (heterodimers composed of LIFR and IL6ST) and type II OSM receptor (heterodimers composed of OSMR and IL6ST) (By similarity). Involved in the maturation of fetal hepatocytes, thereby promoting liver development and regeneration (By similarity).</text>
</comment>
<comment type="subcellular location">
    <subcellularLocation>
        <location>Secreted</location>
    </subcellularLocation>
</comment>
<comment type="PTM">
    <text evidence="1">Propeptide processing is not important for receptor binding activity but may be important growth-inhibitory activity.</text>
</comment>
<comment type="similarity">
    <text evidence="5">Belongs to the LIF/OSM family.</text>
</comment>
<evidence type="ECO:0000250" key="1"/>
<evidence type="ECO:0000250" key="2">
    <source>
        <dbReference type="UniProtKB" id="P13725"/>
    </source>
</evidence>
<evidence type="ECO:0000255" key="3"/>
<evidence type="ECO:0000256" key="4">
    <source>
        <dbReference type="SAM" id="MobiDB-lite"/>
    </source>
</evidence>
<evidence type="ECO:0000305" key="5"/>
<proteinExistence type="inferred from homology"/>
<accession>P53346</accession>
<dbReference type="EMBL" id="S78435">
    <property type="protein sequence ID" value="AAB34208.1"/>
    <property type="molecule type" value="Genomic_DNA"/>
</dbReference>
<dbReference type="EMBL" id="S78434">
    <property type="protein sequence ID" value="AAB34208.1"/>
    <property type="status" value="JOINED"/>
    <property type="molecule type" value="Genomic_DNA"/>
</dbReference>
<dbReference type="EMBL" id="S78487">
    <property type="protein sequence ID" value="AAB34208.1"/>
    <property type="status" value="JOINED"/>
    <property type="molecule type" value="Genomic_DNA"/>
</dbReference>
<dbReference type="PIR" id="A57417">
    <property type="entry name" value="A57417"/>
</dbReference>
<dbReference type="SMR" id="P53346"/>
<dbReference type="FunCoup" id="P53346">
    <property type="interactions" value="34"/>
</dbReference>
<dbReference type="STRING" id="9913.ENSBTAP00000021515"/>
<dbReference type="GlyCosmos" id="P53346">
    <property type="glycosylation" value="1 site, No reported glycans"/>
</dbReference>
<dbReference type="GlyGen" id="P53346">
    <property type="glycosylation" value="1 site"/>
</dbReference>
<dbReference type="PaxDb" id="9913-ENSBTAP00000021515"/>
<dbReference type="eggNOG" id="ENOG502RVJA">
    <property type="taxonomic scope" value="Eukaryota"/>
</dbReference>
<dbReference type="InParanoid" id="P53346"/>
<dbReference type="Proteomes" id="UP000009136">
    <property type="component" value="Unplaced"/>
</dbReference>
<dbReference type="GO" id="GO:0005615">
    <property type="term" value="C:extracellular space"/>
    <property type="evidence" value="ECO:0007669"/>
    <property type="project" value="UniProtKB-KW"/>
</dbReference>
<dbReference type="GO" id="GO:0005125">
    <property type="term" value="F:cytokine activity"/>
    <property type="evidence" value="ECO:0000318"/>
    <property type="project" value="GO_Central"/>
</dbReference>
<dbReference type="GO" id="GO:0005147">
    <property type="term" value="F:oncostatin-M receptor binding"/>
    <property type="evidence" value="ECO:0007669"/>
    <property type="project" value="InterPro"/>
</dbReference>
<dbReference type="GO" id="GO:0006955">
    <property type="term" value="P:immune response"/>
    <property type="evidence" value="ECO:0007669"/>
    <property type="project" value="InterPro"/>
</dbReference>
<dbReference type="GO" id="GO:0038165">
    <property type="term" value="P:oncostatin-M-mediated signaling pathway"/>
    <property type="evidence" value="ECO:0007669"/>
    <property type="project" value="InterPro"/>
</dbReference>
<dbReference type="GO" id="GO:0009891">
    <property type="term" value="P:positive regulation of biosynthetic process"/>
    <property type="evidence" value="ECO:0007669"/>
    <property type="project" value="UniProtKB-ARBA"/>
</dbReference>
<dbReference type="GO" id="GO:0010646">
    <property type="term" value="P:regulation of cell communication"/>
    <property type="evidence" value="ECO:0007669"/>
    <property type="project" value="UniProtKB-ARBA"/>
</dbReference>
<dbReference type="GO" id="GO:0023051">
    <property type="term" value="P:regulation of signaling"/>
    <property type="evidence" value="ECO:0007669"/>
    <property type="project" value="UniProtKB-ARBA"/>
</dbReference>
<dbReference type="Gene3D" id="1.20.1250.10">
    <property type="match status" value="1"/>
</dbReference>
<dbReference type="InterPro" id="IPR009079">
    <property type="entry name" value="4_helix_cytokine-like_core"/>
</dbReference>
<dbReference type="InterPro" id="IPR001581">
    <property type="entry name" value="Leukemia_IF/oncostatin"/>
</dbReference>
<dbReference type="InterPro" id="IPR019827">
    <property type="entry name" value="Leukemia_IF/oncostatin_CS"/>
</dbReference>
<dbReference type="InterPro" id="IPR039578">
    <property type="entry name" value="OSM"/>
</dbReference>
<dbReference type="PANTHER" id="PTHR14261">
    <property type="entry name" value="ONCOSTATIN M"/>
    <property type="match status" value="1"/>
</dbReference>
<dbReference type="PANTHER" id="PTHR14261:SF0">
    <property type="entry name" value="ONCOSTATIN-M"/>
    <property type="match status" value="1"/>
</dbReference>
<dbReference type="Pfam" id="PF01291">
    <property type="entry name" value="LIF_OSM"/>
    <property type="match status" value="1"/>
</dbReference>
<dbReference type="SMART" id="SM00080">
    <property type="entry name" value="LIF_OSM"/>
    <property type="match status" value="1"/>
</dbReference>
<dbReference type="SUPFAM" id="SSF47266">
    <property type="entry name" value="4-helical cytokines"/>
    <property type="match status" value="1"/>
</dbReference>
<dbReference type="PROSITE" id="PS00590">
    <property type="entry name" value="LIF_OSM"/>
    <property type="match status" value="1"/>
</dbReference>
<protein>
    <recommendedName>
        <fullName>Oncostatin-M</fullName>
        <shortName>OSM</shortName>
    </recommendedName>
</protein>
<reference key="1">
    <citation type="journal article" date="1995" name="Mol. Cell. Biol.">
        <title>Developmental abnormalities in mice transgenic for bovine oncostatin M.</title>
        <authorList>
            <person name="Malik N."/>
            <person name="Haugen H.S."/>
            <person name="Modrell B."/>
            <person name="Shoyab M."/>
            <person name="Clegg C.H."/>
        </authorList>
    </citation>
    <scope>NUCLEOTIDE SEQUENCE [GENOMIC DNA]</scope>
</reference>
<keyword id="KW-0165">Cleavage on pair of basic residues</keyword>
<keyword id="KW-0202">Cytokine</keyword>
<keyword id="KW-1015">Disulfide bond</keyword>
<keyword id="KW-0325">Glycoprotein</keyword>
<keyword id="KW-0341">Growth regulation</keyword>
<keyword id="KW-1185">Reference proteome</keyword>
<keyword id="KW-0964">Secreted</keyword>
<keyword id="KW-0732">Signal</keyword>